<reference key="1">
    <citation type="journal article" date="1989" name="Proc. Natl. Acad. Sci. U.S.A.">
        <title>Urate oxidase: primary structure and evolutionary implications.</title>
        <authorList>
            <person name="Wu X."/>
            <person name="Lee C.C."/>
            <person name="Muzny D.M."/>
            <person name="Caskey C.T."/>
        </authorList>
    </citation>
    <scope>NUCLEOTIDE SEQUENCE [MRNA]</scope>
</reference>
<reference key="2">
    <citation type="journal article" date="1988" name="Science">
        <title>Generation of cDNA probes directed by amino acid sequence: cloning of urate oxidase.</title>
        <authorList>
            <person name="Lee C.C."/>
            <person name="Wu X."/>
            <person name="Gibbs R.A."/>
            <person name="Cook R.G."/>
            <person name="Muzny D.M."/>
            <person name="Caskey C.T."/>
        </authorList>
    </citation>
    <scope>NUCLEOTIDE SEQUENCE [MRNA] OF 7-38</scope>
</reference>
<dbReference type="EC" id="1.7.3.3"/>
<dbReference type="EMBL" id="M27697">
    <property type="protein sequence ID" value="AAA31141.1"/>
    <property type="molecule type" value="mRNA"/>
</dbReference>
<dbReference type="EMBL" id="M19733">
    <property type="protein sequence ID" value="AAA31140.1"/>
    <property type="molecule type" value="mRNA"/>
</dbReference>
<dbReference type="PIR" id="C36227">
    <property type="entry name" value="C36227"/>
</dbReference>
<dbReference type="RefSeq" id="NP_999435.1">
    <property type="nucleotide sequence ID" value="NM_214270.1"/>
</dbReference>
<dbReference type="SMR" id="P16164"/>
<dbReference type="FunCoup" id="P16164">
    <property type="interactions" value="78"/>
</dbReference>
<dbReference type="STRING" id="9823.ENSSSCP00000060831"/>
<dbReference type="PaxDb" id="9823-ENSSSCP00000024781"/>
<dbReference type="PeptideAtlas" id="P16164"/>
<dbReference type="Ensembl" id="ENSSSCT00015087661.1">
    <property type="protein sequence ID" value="ENSSSCP00015035726.1"/>
    <property type="gene ID" value="ENSSSCG00015065247.1"/>
</dbReference>
<dbReference type="Ensembl" id="ENSSSCT00030059752.1">
    <property type="protein sequence ID" value="ENSSSCP00030027373.1"/>
    <property type="gene ID" value="ENSSSCG00030042839.1"/>
</dbReference>
<dbReference type="Ensembl" id="ENSSSCT00035036996.1">
    <property type="protein sequence ID" value="ENSSSCP00035014752.1"/>
    <property type="gene ID" value="ENSSSCG00035027951.1"/>
</dbReference>
<dbReference type="Ensembl" id="ENSSSCT00040020425.1">
    <property type="protein sequence ID" value="ENSSSCP00040008566.1"/>
    <property type="gene ID" value="ENSSSCG00040015135.1"/>
</dbReference>
<dbReference type="Ensembl" id="ENSSSCT00045063004.1">
    <property type="protein sequence ID" value="ENSSSCP00045044403.1"/>
    <property type="gene ID" value="ENSSSCG00045036383.1"/>
</dbReference>
<dbReference type="Ensembl" id="ENSSSCT00050069554.1">
    <property type="protein sequence ID" value="ENSSSCP00050029895.1"/>
    <property type="gene ID" value="ENSSSCG00050051079.1"/>
</dbReference>
<dbReference type="Ensembl" id="ENSSSCT00060021426.1">
    <property type="protein sequence ID" value="ENSSSCP00060008810.1"/>
    <property type="gene ID" value="ENSSSCG00060016087.1"/>
</dbReference>
<dbReference type="Ensembl" id="ENSSSCT00065080836.1">
    <property type="protein sequence ID" value="ENSSSCP00065035195.1"/>
    <property type="gene ID" value="ENSSSCG00065059057.1"/>
</dbReference>
<dbReference type="Ensembl" id="ENSSSCT00115037910">
    <property type="protein sequence ID" value="ENSSSCP00115035804"/>
    <property type="gene ID" value="ENSSSCG00115021408"/>
</dbReference>
<dbReference type="GeneID" id="397510"/>
<dbReference type="KEGG" id="ssc:397510"/>
<dbReference type="CTD" id="391051"/>
<dbReference type="eggNOG" id="KOG1599">
    <property type="taxonomic scope" value="Eukaryota"/>
</dbReference>
<dbReference type="InParanoid" id="P16164"/>
<dbReference type="OrthoDB" id="9992118at2759"/>
<dbReference type="BRENDA" id="1.7.3.3">
    <property type="organism ID" value="6170"/>
</dbReference>
<dbReference type="UniPathway" id="UPA00394">
    <property type="reaction ID" value="UER00650"/>
</dbReference>
<dbReference type="Proteomes" id="UP000008227">
    <property type="component" value="Unplaced"/>
</dbReference>
<dbReference type="Proteomes" id="UP000314985">
    <property type="component" value="Unplaced"/>
</dbReference>
<dbReference type="Proteomes" id="UP000694570">
    <property type="component" value="Unplaced"/>
</dbReference>
<dbReference type="Proteomes" id="UP000694571">
    <property type="component" value="Unplaced"/>
</dbReference>
<dbReference type="Proteomes" id="UP000694720">
    <property type="component" value="Unplaced"/>
</dbReference>
<dbReference type="Proteomes" id="UP000694722">
    <property type="component" value="Unplaced"/>
</dbReference>
<dbReference type="Proteomes" id="UP000694723">
    <property type="component" value="Unplaced"/>
</dbReference>
<dbReference type="Proteomes" id="UP000694724">
    <property type="component" value="Unplaced"/>
</dbReference>
<dbReference type="Proteomes" id="UP000694725">
    <property type="component" value="Unplaced"/>
</dbReference>
<dbReference type="Proteomes" id="UP000694726">
    <property type="component" value="Unplaced"/>
</dbReference>
<dbReference type="Proteomes" id="UP000694727">
    <property type="component" value="Unplaced"/>
</dbReference>
<dbReference type="Proteomes" id="UP000694728">
    <property type="component" value="Unplaced"/>
</dbReference>
<dbReference type="GO" id="GO:0005777">
    <property type="term" value="C:peroxisome"/>
    <property type="evidence" value="ECO:0000318"/>
    <property type="project" value="GO_Central"/>
</dbReference>
<dbReference type="GO" id="GO:0004846">
    <property type="term" value="F:urate oxidase activity"/>
    <property type="evidence" value="ECO:0000318"/>
    <property type="project" value="GO_Central"/>
</dbReference>
<dbReference type="GO" id="GO:0006145">
    <property type="term" value="P:purine nucleobase catabolic process"/>
    <property type="evidence" value="ECO:0000318"/>
    <property type="project" value="GO_Central"/>
</dbReference>
<dbReference type="GO" id="GO:0019628">
    <property type="term" value="P:urate catabolic process"/>
    <property type="evidence" value="ECO:0000318"/>
    <property type="project" value="GO_Central"/>
</dbReference>
<dbReference type="CDD" id="cd00445">
    <property type="entry name" value="Uricase"/>
    <property type="match status" value="1"/>
</dbReference>
<dbReference type="FunFam" id="3.10.270.10:FF:000001">
    <property type="entry name" value="Uricase"/>
    <property type="match status" value="1"/>
</dbReference>
<dbReference type="Gene3D" id="3.10.270.10">
    <property type="entry name" value="Urate Oxidase"/>
    <property type="match status" value="1"/>
</dbReference>
<dbReference type="InterPro" id="IPR002042">
    <property type="entry name" value="Uricase"/>
</dbReference>
<dbReference type="InterPro" id="IPR019842">
    <property type="entry name" value="Uricase_CS"/>
</dbReference>
<dbReference type="NCBIfam" id="TIGR03383">
    <property type="entry name" value="urate_oxi"/>
    <property type="match status" value="1"/>
</dbReference>
<dbReference type="PANTHER" id="PTHR42874">
    <property type="entry name" value="URICASE"/>
    <property type="match status" value="1"/>
</dbReference>
<dbReference type="PANTHER" id="PTHR42874:SF1">
    <property type="entry name" value="URICASE"/>
    <property type="match status" value="1"/>
</dbReference>
<dbReference type="Pfam" id="PF01014">
    <property type="entry name" value="Uricase"/>
    <property type="match status" value="2"/>
</dbReference>
<dbReference type="PIRSF" id="PIRSF000241">
    <property type="entry name" value="Urate_oxidase"/>
    <property type="match status" value="1"/>
</dbReference>
<dbReference type="PRINTS" id="PR00093">
    <property type="entry name" value="URICASE"/>
</dbReference>
<dbReference type="SUPFAM" id="SSF55620">
    <property type="entry name" value="Tetrahydrobiopterin biosynthesis enzymes-like"/>
    <property type="match status" value="2"/>
</dbReference>
<dbReference type="PROSITE" id="PS00366">
    <property type="entry name" value="URICASE"/>
    <property type="match status" value="1"/>
</dbReference>
<name>URIC_PIG</name>
<gene>
    <name type="primary">UOX</name>
</gene>
<keyword id="KW-0007">Acetylation</keyword>
<keyword id="KW-0560">Oxidoreductase</keyword>
<keyword id="KW-0576">Peroxisome</keyword>
<keyword id="KW-0597">Phosphoprotein</keyword>
<keyword id="KW-0659">Purine metabolism</keyword>
<keyword id="KW-1185">Reference proteome</keyword>
<organism>
    <name type="scientific">Sus scrofa</name>
    <name type="common">Pig</name>
    <dbReference type="NCBI Taxonomy" id="9823"/>
    <lineage>
        <taxon>Eukaryota</taxon>
        <taxon>Metazoa</taxon>
        <taxon>Chordata</taxon>
        <taxon>Craniata</taxon>
        <taxon>Vertebrata</taxon>
        <taxon>Euteleostomi</taxon>
        <taxon>Mammalia</taxon>
        <taxon>Eutheria</taxon>
        <taxon>Laurasiatheria</taxon>
        <taxon>Artiodactyla</taxon>
        <taxon>Suina</taxon>
        <taxon>Suidae</taxon>
        <taxon>Sus</taxon>
    </lineage>
</organism>
<protein>
    <recommendedName>
        <fullName>Uricase</fullName>
        <ecNumber>1.7.3.3</ecNumber>
    </recommendedName>
    <alternativeName>
        <fullName>Urate oxidase</fullName>
    </alternativeName>
</protein>
<accession>P16164</accession>
<sequence length="304" mass="35008">MAHYRNDYKKNDEVEFVRTGYGKDMIKVLHIQRDGKYHSIKEVATSVQLTLSSKKDYLHGDNSDVIPTDTIKNTVNVLAKFKGIKSIETFAVTICEHFLSSFKHVIRAQVYVEEVPWKRFEKNGVKHVHAFIYTPTGTHFCEVEQIRNGPPVIHSGIKDLKVLKTTQSGFEGFIKDQFTTLPEVKDRCFATQVYCKWRYHQGRDVDFEATWDTVRSIVLQKFAGPYDKGEYSPSVQKTLYDIQVLTLGQVPEIEDMEISLPNIHYLNIDMSKMGLINKEEVLLPLDNPYGRITGTVKRKLTSRL</sequence>
<proteinExistence type="evidence at transcript level"/>
<evidence type="ECO:0000250" key="1">
    <source>
        <dbReference type="UniProtKB" id="D0VWQ1"/>
    </source>
</evidence>
<evidence type="ECO:0000250" key="2">
    <source>
        <dbReference type="UniProtKB" id="P25688"/>
    </source>
</evidence>
<evidence type="ECO:0000250" key="3">
    <source>
        <dbReference type="UniProtKB" id="Q00511"/>
    </source>
</evidence>
<evidence type="ECO:0000255" key="4"/>
<evidence type="ECO:0000305" key="5"/>
<feature type="initiator methionine" description="Removed" evidence="2">
    <location>
        <position position="1"/>
    </location>
</feature>
<feature type="chain" id="PRO_0000165988" description="Uricase">
    <location>
        <begin position="2"/>
        <end position="304"/>
    </location>
</feature>
<feature type="short sequence motif" description="Microbody targeting signal" evidence="4">
    <location>
        <begin position="302"/>
        <end position="304"/>
    </location>
</feature>
<feature type="active site" description="Charge relay system" evidence="1">
    <location>
        <position position="23"/>
    </location>
</feature>
<feature type="active site" description="Charge relay system" evidence="1">
    <location>
        <position position="68"/>
    </location>
</feature>
<feature type="active site" description="Charge relay system" evidence="1">
    <location>
        <position position="264"/>
    </location>
</feature>
<feature type="binding site" evidence="3">
    <location>
        <position position="68"/>
    </location>
    <ligand>
        <name>urate</name>
        <dbReference type="ChEBI" id="CHEBI:17775"/>
    </ligand>
</feature>
<feature type="binding site" evidence="3">
    <location>
        <position position="69"/>
    </location>
    <ligand>
        <name>urate</name>
        <dbReference type="ChEBI" id="CHEBI:17775"/>
    </ligand>
</feature>
<feature type="binding site" evidence="3">
    <location>
        <position position="170"/>
    </location>
    <ligand>
        <name>urate</name>
        <dbReference type="ChEBI" id="CHEBI:17775"/>
    </ligand>
</feature>
<feature type="binding site" evidence="3">
    <location>
        <position position="187"/>
    </location>
    <ligand>
        <name>urate</name>
        <dbReference type="ChEBI" id="CHEBI:17775"/>
    </ligand>
</feature>
<feature type="binding site" evidence="3">
    <location>
        <position position="235"/>
    </location>
    <ligand>
        <name>urate</name>
        <dbReference type="ChEBI" id="CHEBI:17775"/>
    </ligand>
</feature>
<feature type="binding site" evidence="3">
    <location>
        <position position="236"/>
    </location>
    <ligand>
        <name>urate</name>
        <dbReference type="ChEBI" id="CHEBI:17775"/>
    </ligand>
</feature>
<feature type="binding site" evidence="3">
    <location>
        <position position="262"/>
    </location>
    <ligand>
        <name>urate</name>
        <dbReference type="ChEBI" id="CHEBI:17775"/>
    </ligand>
</feature>
<feature type="modified residue" description="N-acetylalanine" evidence="2">
    <location>
        <position position="2"/>
    </location>
</feature>
<feature type="modified residue" description="N6-acetyllysine; alternate" evidence="2">
    <location>
        <position position="10"/>
    </location>
</feature>
<feature type="modified residue" description="N6-succinyllysine; alternate" evidence="2">
    <location>
        <position position="10"/>
    </location>
</feature>
<feature type="modified residue" description="N6-acetyllysine; alternate" evidence="2">
    <location>
        <position position="23"/>
    </location>
</feature>
<feature type="modified residue" description="N6-succinyllysine; alternate" evidence="2">
    <location>
        <position position="23"/>
    </location>
</feature>
<feature type="modified residue" description="N6-acetyllysine" evidence="2">
    <location>
        <position position="27"/>
    </location>
</feature>
<feature type="modified residue" description="N6-acetyllysine" evidence="2">
    <location>
        <position position="36"/>
    </location>
</feature>
<feature type="modified residue" description="Phosphoserine" evidence="2">
    <location>
        <position position="39"/>
    </location>
</feature>
<feature type="modified residue" description="Phosphoserine" evidence="2">
    <location>
        <position position="63"/>
    </location>
</feature>
<feature type="modified residue" description="N6-acetyllysine" evidence="2">
    <location>
        <position position="118"/>
    </location>
</feature>
<feature type="modified residue" description="N6-acetyllysine" evidence="2">
    <location>
        <position position="122"/>
    </location>
</feature>
<feature type="modified residue" description="N6-acetyllysine" evidence="2">
    <location>
        <position position="164"/>
    </location>
</feature>
<feature type="modified residue" description="N6-acetyllysine" evidence="2">
    <location>
        <position position="175"/>
    </location>
</feature>
<feature type="modified residue" description="N6-acetyllysine" evidence="2">
    <location>
        <position position="185"/>
    </location>
</feature>
<feature type="modified residue" description="N6-acetyllysine; alternate" evidence="2">
    <location>
        <position position="221"/>
    </location>
</feature>
<feature type="modified residue" description="N6-succinyllysine; alternate" evidence="2">
    <location>
        <position position="221"/>
    </location>
</feature>
<feature type="modified residue" description="N6-acetyllysine; alternate" evidence="2">
    <location>
        <position position="228"/>
    </location>
</feature>
<feature type="modified residue" description="N6-succinyllysine; alternate" evidence="2">
    <location>
        <position position="228"/>
    </location>
</feature>
<feature type="modified residue" description="Phosphoserine" evidence="2">
    <location>
        <position position="232"/>
    </location>
</feature>
<feature type="modified residue" description="N6-acetyllysine" evidence="2">
    <location>
        <position position="278"/>
    </location>
</feature>
<feature type="modified residue" description="Phosphotyrosine" evidence="2">
    <location>
        <position position="289"/>
    </location>
</feature>
<comment type="function">
    <text>Catalyzes the oxidation of uric acid to 5-hydroxyisourate, which is further processed to form (S)-allantoin.</text>
</comment>
<comment type="catalytic activity">
    <reaction>
        <text>urate + O2 + H2O = 5-hydroxyisourate + H2O2</text>
        <dbReference type="Rhea" id="RHEA:21368"/>
        <dbReference type="ChEBI" id="CHEBI:15377"/>
        <dbReference type="ChEBI" id="CHEBI:15379"/>
        <dbReference type="ChEBI" id="CHEBI:16240"/>
        <dbReference type="ChEBI" id="CHEBI:17775"/>
        <dbReference type="ChEBI" id="CHEBI:18072"/>
        <dbReference type="EC" id="1.7.3.3"/>
    </reaction>
</comment>
<comment type="pathway">
    <text>Purine metabolism; urate degradation; (S)-allantoin from urate: step 1/3.</text>
</comment>
<comment type="subunit">
    <text>Homotetramer.</text>
</comment>
<comment type="subcellular location">
    <subcellularLocation>
        <location>Peroxisome</location>
    </subcellularLocation>
</comment>
<comment type="similarity">
    <text evidence="5">Belongs to the uricase family.</text>
</comment>